<sequence length="348" mass="38448">MEQFFWSYVWPALIMVGQSLLLLVCLLVAIAFLLLADRKVWAAVQLRRGPNVVGPFGLFQSFADLLKFILKEPVIPAGANKAVFLLAPLVAVTLALATYAVIPFADGWVVANINVGILYIFAISSLEVYGIIMGGWASNSKYPFLGALRSAAQMVSYEVSIGLVIVTVLLCVGSLNLTDIVLAQRTGLGTMMGLPASFLDWHWLSLFPMFIVFFISGLAETNRPPFDLPEAESELVAGHMVEYGSTPYMMFMLGEYAAIVLICCLTTILFLGGWLPIVDVWFLNWVPGIVWFALKGCMVFFMIALTKAFVPRYRYDQLMRLGWKVFLPLSLAMVVIVAFVLKLTGWAG</sequence>
<comment type="function">
    <text evidence="1">NDH-1 shuttles electrons from NADH, via FMN and iron-sulfur (Fe-S) centers, to quinones in the respiratory chain. The immediate electron acceptor for the enzyme in this species is believed to be ubiquinone. Couples the redox reaction to proton translocation (for every two electrons transferred, four hydrogen ions are translocated across the cytoplasmic membrane), and thus conserves the redox energy in a proton gradient. This subunit may bind ubiquinone.</text>
</comment>
<comment type="catalytic activity">
    <reaction evidence="1">
        <text>a quinone + NADH + 5 H(+)(in) = a quinol + NAD(+) + 4 H(+)(out)</text>
        <dbReference type="Rhea" id="RHEA:57888"/>
        <dbReference type="ChEBI" id="CHEBI:15378"/>
        <dbReference type="ChEBI" id="CHEBI:24646"/>
        <dbReference type="ChEBI" id="CHEBI:57540"/>
        <dbReference type="ChEBI" id="CHEBI:57945"/>
        <dbReference type="ChEBI" id="CHEBI:132124"/>
    </reaction>
</comment>
<comment type="subunit">
    <text evidence="1">NDH-1 is composed of 14 different subunits. Subunits NuoA, H, J, K, L, M, N constitute the membrane sector of the complex.</text>
</comment>
<comment type="subcellular location">
    <subcellularLocation>
        <location evidence="1">Cell inner membrane</location>
        <topology evidence="1">Multi-pass membrane protein</topology>
    </subcellularLocation>
</comment>
<comment type="similarity">
    <text evidence="1">Belongs to the complex I subunit 1 family.</text>
</comment>
<feature type="chain" id="PRO_0000244886" description="NADH-quinone oxidoreductase subunit H">
    <location>
        <begin position="1"/>
        <end position="348"/>
    </location>
</feature>
<feature type="transmembrane region" description="Helical" evidence="1">
    <location>
        <begin position="13"/>
        <end position="33"/>
    </location>
</feature>
<feature type="transmembrane region" description="Helical" evidence="1">
    <location>
        <begin position="50"/>
        <end position="70"/>
    </location>
</feature>
<feature type="transmembrane region" description="Helical" evidence="1">
    <location>
        <begin position="82"/>
        <end position="102"/>
    </location>
</feature>
<feature type="transmembrane region" description="Helical" evidence="1">
    <location>
        <begin position="115"/>
        <end position="135"/>
    </location>
</feature>
<feature type="transmembrane region" description="Helical" evidence="1">
    <location>
        <begin position="161"/>
        <end position="181"/>
    </location>
</feature>
<feature type="transmembrane region" description="Helical" evidence="1">
    <location>
        <begin position="198"/>
        <end position="218"/>
    </location>
</feature>
<feature type="transmembrane region" description="Helical" evidence="1">
    <location>
        <begin position="258"/>
        <end position="278"/>
    </location>
</feature>
<feature type="transmembrane region" description="Helical" evidence="1">
    <location>
        <begin position="285"/>
        <end position="305"/>
    </location>
</feature>
<feature type="transmembrane region" description="Helical" evidence="1">
    <location>
        <begin position="321"/>
        <end position="341"/>
    </location>
</feature>
<keyword id="KW-0997">Cell inner membrane</keyword>
<keyword id="KW-1003">Cell membrane</keyword>
<keyword id="KW-0472">Membrane</keyword>
<keyword id="KW-0520">NAD</keyword>
<keyword id="KW-0874">Quinone</keyword>
<keyword id="KW-1185">Reference proteome</keyword>
<keyword id="KW-1278">Translocase</keyword>
<keyword id="KW-0812">Transmembrane</keyword>
<keyword id="KW-1133">Transmembrane helix</keyword>
<keyword id="KW-0830">Ubiquinone</keyword>
<name>NUOH_AGRFC</name>
<accession>Q8UFX0</accession>
<accession>Q7CZL5</accession>
<reference key="1">
    <citation type="journal article" date="2001" name="Science">
        <title>The genome of the natural genetic engineer Agrobacterium tumefaciens C58.</title>
        <authorList>
            <person name="Wood D.W."/>
            <person name="Setubal J.C."/>
            <person name="Kaul R."/>
            <person name="Monks D.E."/>
            <person name="Kitajima J.P."/>
            <person name="Okura V.K."/>
            <person name="Zhou Y."/>
            <person name="Chen L."/>
            <person name="Wood G.E."/>
            <person name="Almeida N.F. Jr."/>
            <person name="Woo L."/>
            <person name="Chen Y."/>
            <person name="Paulsen I.T."/>
            <person name="Eisen J.A."/>
            <person name="Karp P.D."/>
            <person name="Bovee D. Sr."/>
            <person name="Chapman P."/>
            <person name="Clendenning J."/>
            <person name="Deatherage G."/>
            <person name="Gillet W."/>
            <person name="Grant C."/>
            <person name="Kutyavin T."/>
            <person name="Levy R."/>
            <person name="Li M.-J."/>
            <person name="McClelland E."/>
            <person name="Palmieri A."/>
            <person name="Raymond C."/>
            <person name="Rouse G."/>
            <person name="Saenphimmachak C."/>
            <person name="Wu Z."/>
            <person name="Romero P."/>
            <person name="Gordon D."/>
            <person name="Zhang S."/>
            <person name="Yoo H."/>
            <person name="Tao Y."/>
            <person name="Biddle P."/>
            <person name="Jung M."/>
            <person name="Krespan W."/>
            <person name="Perry M."/>
            <person name="Gordon-Kamm B."/>
            <person name="Liao L."/>
            <person name="Kim S."/>
            <person name="Hendrick C."/>
            <person name="Zhao Z.-Y."/>
            <person name="Dolan M."/>
            <person name="Chumley F."/>
            <person name="Tingey S.V."/>
            <person name="Tomb J.-F."/>
            <person name="Gordon M.P."/>
            <person name="Olson M.V."/>
            <person name="Nester E.W."/>
        </authorList>
    </citation>
    <scope>NUCLEOTIDE SEQUENCE [LARGE SCALE GENOMIC DNA]</scope>
    <source>
        <strain>C58 / ATCC 33970</strain>
    </source>
</reference>
<reference key="2">
    <citation type="journal article" date="2001" name="Science">
        <title>Genome sequence of the plant pathogen and biotechnology agent Agrobacterium tumefaciens C58.</title>
        <authorList>
            <person name="Goodner B."/>
            <person name="Hinkle G."/>
            <person name="Gattung S."/>
            <person name="Miller N."/>
            <person name="Blanchard M."/>
            <person name="Qurollo B."/>
            <person name="Goldman B.S."/>
            <person name="Cao Y."/>
            <person name="Askenazi M."/>
            <person name="Halling C."/>
            <person name="Mullin L."/>
            <person name="Houmiel K."/>
            <person name="Gordon J."/>
            <person name="Vaudin M."/>
            <person name="Iartchouk O."/>
            <person name="Epp A."/>
            <person name="Liu F."/>
            <person name="Wollam C."/>
            <person name="Allinger M."/>
            <person name="Doughty D."/>
            <person name="Scott C."/>
            <person name="Lappas C."/>
            <person name="Markelz B."/>
            <person name="Flanagan C."/>
            <person name="Crowell C."/>
            <person name="Gurson J."/>
            <person name="Lomo C."/>
            <person name="Sear C."/>
            <person name="Strub G."/>
            <person name="Cielo C."/>
            <person name="Slater S."/>
        </authorList>
    </citation>
    <scope>NUCLEOTIDE SEQUENCE [LARGE SCALE GENOMIC DNA]</scope>
    <source>
        <strain>C58 / ATCC 33970</strain>
    </source>
</reference>
<gene>
    <name evidence="1" type="primary">nuoH</name>
    <name type="ordered locus">Atu1277</name>
    <name type="ORF">AGR_C_2354</name>
</gene>
<proteinExistence type="inferred from homology"/>
<dbReference type="EC" id="7.1.1.-" evidence="1"/>
<dbReference type="EMBL" id="AE007869">
    <property type="protein sequence ID" value="AAK87072.1"/>
    <property type="molecule type" value="Genomic_DNA"/>
</dbReference>
<dbReference type="PIR" id="AE2733">
    <property type="entry name" value="AE2733"/>
</dbReference>
<dbReference type="PIR" id="G97514">
    <property type="entry name" value="G97514"/>
</dbReference>
<dbReference type="RefSeq" id="NP_354287.1">
    <property type="nucleotide sequence ID" value="NC_003062.2"/>
</dbReference>
<dbReference type="RefSeq" id="WP_010971512.1">
    <property type="nucleotide sequence ID" value="NC_003062.2"/>
</dbReference>
<dbReference type="SMR" id="Q8UFX0"/>
<dbReference type="STRING" id="176299.Atu1277"/>
<dbReference type="EnsemblBacteria" id="AAK87072">
    <property type="protein sequence ID" value="AAK87072"/>
    <property type="gene ID" value="Atu1277"/>
</dbReference>
<dbReference type="GeneID" id="1133315"/>
<dbReference type="KEGG" id="atu:Atu1277"/>
<dbReference type="PATRIC" id="fig|176299.10.peg.1294"/>
<dbReference type="eggNOG" id="COG1005">
    <property type="taxonomic scope" value="Bacteria"/>
</dbReference>
<dbReference type="HOGENOM" id="CLU_015134_0_1_5"/>
<dbReference type="OrthoDB" id="9803734at2"/>
<dbReference type="PhylomeDB" id="Q8UFX0"/>
<dbReference type="BioCyc" id="AGRO:ATU1277-MONOMER"/>
<dbReference type="Proteomes" id="UP000000813">
    <property type="component" value="Chromosome circular"/>
</dbReference>
<dbReference type="GO" id="GO:0005886">
    <property type="term" value="C:plasma membrane"/>
    <property type="evidence" value="ECO:0007669"/>
    <property type="project" value="UniProtKB-SubCell"/>
</dbReference>
<dbReference type="GO" id="GO:0003954">
    <property type="term" value="F:NADH dehydrogenase activity"/>
    <property type="evidence" value="ECO:0007669"/>
    <property type="project" value="TreeGrafter"/>
</dbReference>
<dbReference type="GO" id="GO:0016655">
    <property type="term" value="F:oxidoreductase activity, acting on NAD(P)H, quinone or similar compound as acceptor"/>
    <property type="evidence" value="ECO:0007669"/>
    <property type="project" value="UniProtKB-UniRule"/>
</dbReference>
<dbReference type="GO" id="GO:0048038">
    <property type="term" value="F:quinone binding"/>
    <property type="evidence" value="ECO:0007669"/>
    <property type="project" value="UniProtKB-KW"/>
</dbReference>
<dbReference type="GO" id="GO:0009060">
    <property type="term" value="P:aerobic respiration"/>
    <property type="evidence" value="ECO:0007669"/>
    <property type="project" value="TreeGrafter"/>
</dbReference>
<dbReference type="HAMAP" id="MF_01350">
    <property type="entry name" value="NDH1_NuoH"/>
    <property type="match status" value="1"/>
</dbReference>
<dbReference type="InterPro" id="IPR001694">
    <property type="entry name" value="NADH_UbQ_OxRdtase_su1/FPO"/>
</dbReference>
<dbReference type="InterPro" id="IPR018086">
    <property type="entry name" value="NADH_UbQ_OxRdtase_su1_CS"/>
</dbReference>
<dbReference type="NCBIfam" id="NF004741">
    <property type="entry name" value="PRK06076.1-2"/>
    <property type="match status" value="1"/>
</dbReference>
<dbReference type="NCBIfam" id="NF004745">
    <property type="entry name" value="PRK06076.1-6"/>
    <property type="match status" value="1"/>
</dbReference>
<dbReference type="PANTHER" id="PTHR11432">
    <property type="entry name" value="NADH DEHYDROGENASE SUBUNIT 1"/>
    <property type="match status" value="1"/>
</dbReference>
<dbReference type="PANTHER" id="PTHR11432:SF3">
    <property type="entry name" value="NADH-UBIQUINONE OXIDOREDUCTASE CHAIN 1"/>
    <property type="match status" value="1"/>
</dbReference>
<dbReference type="Pfam" id="PF00146">
    <property type="entry name" value="NADHdh"/>
    <property type="match status" value="1"/>
</dbReference>
<dbReference type="PROSITE" id="PS00668">
    <property type="entry name" value="COMPLEX1_ND1_2"/>
    <property type="match status" value="1"/>
</dbReference>
<organism>
    <name type="scientific">Agrobacterium fabrum (strain C58 / ATCC 33970)</name>
    <name type="common">Agrobacterium tumefaciens (strain C58)</name>
    <dbReference type="NCBI Taxonomy" id="176299"/>
    <lineage>
        <taxon>Bacteria</taxon>
        <taxon>Pseudomonadati</taxon>
        <taxon>Pseudomonadota</taxon>
        <taxon>Alphaproteobacteria</taxon>
        <taxon>Hyphomicrobiales</taxon>
        <taxon>Rhizobiaceae</taxon>
        <taxon>Rhizobium/Agrobacterium group</taxon>
        <taxon>Agrobacterium</taxon>
        <taxon>Agrobacterium tumefaciens complex</taxon>
    </lineage>
</organism>
<evidence type="ECO:0000255" key="1">
    <source>
        <dbReference type="HAMAP-Rule" id="MF_01350"/>
    </source>
</evidence>
<protein>
    <recommendedName>
        <fullName evidence="1">NADH-quinone oxidoreductase subunit H</fullName>
        <ecNumber evidence="1">7.1.1.-</ecNumber>
    </recommendedName>
    <alternativeName>
        <fullName evidence="1">NADH dehydrogenase I subunit H</fullName>
    </alternativeName>
    <alternativeName>
        <fullName evidence="1">NDH-1 subunit H</fullName>
    </alternativeName>
</protein>